<organism>
    <name type="scientific">Pyrococcus furiosus (strain ATCC 43587 / DSM 3638 / JCM 8422 / Vc1)</name>
    <dbReference type="NCBI Taxonomy" id="186497"/>
    <lineage>
        <taxon>Archaea</taxon>
        <taxon>Methanobacteriati</taxon>
        <taxon>Methanobacteriota</taxon>
        <taxon>Thermococci</taxon>
        <taxon>Thermococcales</taxon>
        <taxon>Thermococcaceae</taxon>
        <taxon>Pyrococcus</taxon>
    </lineage>
</organism>
<proteinExistence type="evidence at protein level"/>
<comment type="function">
    <text evidence="1">This protein binds specifically to 23S rRNA. It makes multiple contacts with different domains of the 23S rRNA in the assembled 50S subunit and ribosome.</text>
</comment>
<comment type="function">
    <text evidence="1">The globular domain of the protein is located near the polypeptide exit tunnel on the outside of the subunit, while an extended beta-hairpin is found that lines the wall of the exit tunnel in the center of the 70S ribosome.</text>
</comment>
<comment type="subunit">
    <text evidence="1 2">Part of the 50S ribosomal subunit.</text>
</comment>
<comment type="similarity">
    <text evidence="1">Belongs to the universal ribosomal protein uL22 family.</text>
</comment>
<keyword id="KW-0002">3D-structure</keyword>
<keyword id="KW-1185">Reference proteome</keyword>
<keyword id="KW-0687">Ribonucleoprotein</keyword>
<keyword id="KW-0689">Ribosomal protein</keyword>
<keyword id="KW-0694">RNA-binding</keyword>
<keyword id="KW-0699">rRNA-binding</keyword>
<feature type="chain" id="PRO_0000125284" description="Large ribosomal subunit protein uL22">
    <location>
        <begin position="1"/>
        <end position="155"/>
    </location>
</feature>
<dbReference type="EMBL" id="AE009950">
    <property type="protein sequence ID" value="AAL81944.1"/>
    <property type="molecule type" value="Genomic_DNA"/>
</dbReference>
<dbReference type="PDB" id="4V6U">
    <property type="method" value="EM"/>
    <property type="resolution" value="6.60 A"/>
    <property type="chains" value="BS=1-155"/>
</dbReference>
<dbReference type="PDBsum" id="4V6U"/>
<dbReference type="SMR" id="Q8U003"/>
<dbReference type="STRING" id="186497.PF1820"/>
<dbReference type="PaxDb" id="186497-PF1820"/>
<dbReference type="KEGG" id="pfu:PF1820"/>
<dbReference type="PATRIC" id="fig|186497.12.peg.1891"/>
<dbReference type="eggNOG" id="arCOG04098">
    <property type="taxonomic scope" value="Archaea"/>
</dbReference>
<dbReference type="HOGENOM" id="CLU_083987_0_2_2"/>
<dbReference type="OrthoDB" id="314984at2157"/>
<dbReference type="PhylomeDB" id="Q8U003"/>
<dbReference type="Proteomes" id="UP000001013">
    <property type="component" value="Chromosome"/>
</dbReference>
<dbReference type="GO" id="GO:0022625">
    <property type="term" value="C:cytosolic large ribosomal subunit"/>
    <property type="evidence" value="ECO:0007669"/>
    <property type="project" value="TreeGrafter"/>
</dbReference>
<dbReference type="GO" id="GO:0019843">
    <property type="term" value="F:rRNA binding"/>
    <property type="evidence" value="ECO:0007669"/>
    <property type="project" value="UniProtKB-UniRule"/>
</dbReference>
<dbReference type="GO" id="GO:0003735">
    <property type="term" value="F:structural constituent of ribosome"/>
    <property type="evidence" value="ECO:0007669"/>
    <property type="project" value="InterPro"/>
</dbReference>
<dbReference type="GO" id="GO:0002181">
    <property type="term" value="P:cytoplasmic translation"/>
    <property type="evidence" value="ECO:0007669"/>
    <property type="project" value="TreeGrafter"/>
</dbReference>
<dbReference type="CDD" id="cd00336">
    <property type="entry name" value="Ribosomal_L22"/>
    <property type="match status" value="1"/>
</dbReference>
<dbReference type="FunFam" id="3.90.470.10:FF:000015">
    <property type="entry name" value="50S ribosomal protein L22"/>
    <property type="match status" value="1"/>
</dbReference>
<dbReference type="Gene3D" id="3.90.470.10">
    <property type="entry name" value="Ribosomal protein L22/L17"/>
    <property type="match status" value="1"/>
</dbReference>
<dbReference type="HAMAP" id="MF_01331_A">
    <property type="entry name" value="Ribosomal_uL22_A"/>
    <property type="match status" value="1"/>
</dbReference>
<dbReference type="InterPro" id="IPR001063">
    <property type="entry name" value="Ribosomal_uL22"/>
</dbReference>
<dbReference type="InterPro" id="IPR018260">
    <property type="entry name" value="Ribosomal_uL22_CS"/>
</dbReference>
<dbReference type="InterPro" id="IPR005721">
    <property type="entry name" value="Ribosomal_uL22_euk/arc"/>
</dbReference>
<dbReference type="InterPro" id="IPR036394">
    <property type="entry name" value="Ribosomal_uL22_sf"/>
</dbReference>
<dbReference type="NCBIfam" id="NF003260">
    <property type="entry name" value="PRK04223.1"/>
    <property type="match status" value="1"/>
</dbReference>
<dbReference type="NCBIfam" id="TIGR01038">
    <property type="entry name" value="uL22_arch_euk"/>
    <property type="match status" value="1"/>
</dbReference>
<dbReference type="PANTHER" id="PTHR11593">
    <property type="entry name" value="60S RIBOSOMAL PROTEIN L17"/>
    <property type="match status" value="1"/>
</dbReference>
<dbReference type="PANTHER" id="PTHR11593:SF10">
    <property type="entry name" value="60S RIBOSOMAL PROTEIN L17"/>
    <property type="match status" value="1"/>
</dbReference>
<dbReference type="Pfam" id="PF00237">
    <property type="entry name" value="Ribosomal_L22"/>
    <property type="match status" value="1"/>
</dbReference>
<dbReference type="SUPFAM" id="SSF54843">
    <property type="entry name" value="Ribosomal protein L22"/>
    <property type="match status" value="1"/>
</dbReference>
<dbReference type="PROSITE" id="PS00464">
    <property type="entry name" value="RIBOSOMAL_L22"/>
    <property type="match status" value="1"/>
</dbReference>
<evidence type="ECO:0000255" key="1">
    <source>
        <dbReference type="HAMAP-Rule" id="MF_01331"/>
    </source>
</evidence>
<evidence type="ECO:0000269" key="2">
    <source>
    </source>
</evidence>
<evidence type="ECO:0007744" key="3">
    <source>
        <dbReference type="PDB" id="4V6U"/>
    </source>
</evidence>
<sequence>MAKRFGYSFQNFDPKRMARASARDLRISPKLAVEVCRELRGMMLNDALRYLDDVIALKRPVPLKRYNDSQGHKPGKGFGPGRYPVKVAKAIKKVLLNVKNNAVQKGLDPDKLKIIHIAAHKGPVLRGWYPRAFGRATPFNEQTTHIEVVVEEIRR</sequence>
<name>RL22_PYRFU</name>
<gene>
    <name evidence="1" type="primary">rpl22</name>
    <name type="ordered locus">PF1820</name>
</gene>
<reference key="1">
    <citation type="journal article" date="1999" name="Genetics">
        <title>Divergence of the hyperthermophilic archaea Pyrococcus furiosus and P. horikoshii inferred from complete genomic sequences.</title>
        <authorList>
            <person name="Maeder D.L."/>
            <person name="Weiss R.B."/>
            <person name="Dunn D.M."/>
            <person name="Cherry J.L."/>
            <person name="Gonzalez J.M."/>
            <person name="DiRuggiero J."/>
            <person name="Robb F.T."/>
        </authorList>
    </citation>
    <scope>NUCLEOTIDE SEQUENCE [LARGE SCALE GENOMIC DNA]</scope>
    <source>
        <strain>ATCC 43587 / DSM 3638 / JCM 8422 / Vc1</strain>
    </source>
</reference>
<reference evidence="3" key="2">
    <citation type="journal article" date="2013" name="Nucleic Acids Res.">
        <title>Promiscuous behaviour of archaeal ribosomal proteins: implications for eukaryotic ribosome evolution.</title>
        <authorList>
            <person name="Armache J.P."/>
            <person name="Anger A.M."/>
            <person name="Marquez V."/>
            <person name="Franckenberg S."/>
            <person name="Frohlich T."/>
            <person name="Villa E."/>
            <person name="Berninghausen O."/>
            <person name="Thomm M."/>
            <person name="Arnold G.J."/>
            <person name="Beckmann R."/>
            <person name="Wilson D.N."/>
        </authorList>
    </citation>
    <scope>STRUCTURE BY ELECTRON MICROSCOPY (6.60 ANGSTROMS) IN THE 70S RIBOSOME</scope>
    <scope>SUBUNIT</scope>
</reference>
<protein>
    <recommendedName>
        <fullName evidence="1">Large ribosomal subunit protein uL22</fullName>
    </recommendedName>
    <alternativeName>
        <fullName>50S ribosomal protein L22</fullName>
    </alternativeName>
</protein>
<accession>Q8U003</accession>